<reference key="1">
    <citation type="journal article" date="2002" name="Nature">
        <title>Sequence and analysis of chromosome 2 of Dictyostelium discoideum.</title>
        <authorList>
            <person name="Gloeckner G."/>
            <person name="Eichinger L."/>
            <person name="Szafranski K."/>
            <person name="Pachebat J.A."/>
            <person name="Bankier A.T."/>
            <person name="Dear P.H."/>
            <person name="Lehmann R."/>
            <person name="Baumgart C."/>
            <person name="Parra G."/>
            <person name="Abril J.F."/>
            <person name="Guigo R."/>
            <person name="Kumpf K."/>
            <person name="Tunggal B."/>
            <person name="Cox E.C."/>
            <person name="Quail M.A."/>
            <person name="Platzer M."/>
            <person name="Rosenthal A."/>
            <person name="Noegel A.A."/>
        </authorList>
    </citation>
    <scope>NUCLEOTIDE SEQUENCE [LARGE SCALE GENOMIC DNA]</scope>
    <source>
        <strain>AX4</strain>
    </source>
</reference>
<reference key="2">
    <citation type="journal article" date="2005" name="Nature">
        <title>The genome of the social amoeba Dictyostelium discoideum.</title>
        <authorList>
            <person name="Eichinger L."/>
            <person name="Pachebat J.A."/>
            <person name="Gloeckner G."/>
            <person name="Rajandream M.A."/>
            <person name="Sucgang R."/>
            <person name="Berriman M."/>
            <person name="Song J."/>
            <person name="Olsen R."/>
            <person name="Szafranski K."/>
            <person name="Xu Q."/>
            <person name="Tunggal B."/>
            <person name="Kummerfeld S."/>
            <person name="Madera M."/>
            <person name="Konfortov B.A."/>
            <person name="Rivero F."/>
            <person name="Bankier A.T."/>
            <person name="Lehmann R."/>
            <person name="Hamlin N."/>
            <person name="Davies R."/>
            <person name="Gaudet P."/>
            <person name="Fey P."/>
            <person name="Pilcher K."/>
            <person name="Chen G."/>
            <person name="Saunders D."/>
            <person name="Sodergren E.J."/>
            <person name="Davis P."/>
            <person name="Kerhornou A."/>
            <person name="Nie X."/>
            <person name="Hall N."/>
            <person name="Anjard C."/>
            <person name="Hemphill L."/>
            <person name="Bason N."/>
            <person name="Farbrother P."/>
            <person name="Desany B."/>
            <person name="Just E."/>
            <person name="Morio T."/>
            <person name="Rost R."/>
            <person name="Churcher C.M."/>
            <person name="Cooper J."/>
            <person name="Haydock S."/>
            <person name="van Driessche N."/>
            <person name="Cronin A."/>
            <person name="Goodhead I."/>
            <person name="Muzny D.M."/>
            <person name="Mourier T."/>
            <person name="Pain A."/>
            <person name="Lu M."/>
            <person name="Harper D."/>
            <person name="Lindsay R."/>
            <person name="Hauser H."/>
            <person name="James K.D."/>
            <person name="Quiles M."/>
            <person name="Madan Babu M."/>
            <person name="Saito T."/>
            <person name="Buchrieser C."/>
            <person name="Wardroper A."/>
            <person name="Felder M."/>
            <person name="Thangavelu M."/>
            <person name="Johnson D."/>
            <person name="Knights A."/>
            <person name="Loulseged H."/>
            <person name="Mungall K.L."/>
            <person name="Oliver K."/>
            <person name="Price C."/>
            <person name="Quail M.A."/>
            <person name="Urushihara H."/>
            <person name="Hernandez J."/>
            <person name="Rabbinowitsch E."/>
            <person name="Steffen D."/>
            <person name="Sanders M."/>
            <person name="Ma J."/>
            <person name="Kohara Y."/>
            <person name="Sharp S."/>
            <person name="Simmonds M.N."/>
            <person name="Spiegler S."/>
            <person name="Tivey A."/>
            <person name="Sugano S."/>
            <person name="White B."/>
            <person name="Walker D."/>
            <person name="Woodward J.R."/>
            <person name="Winckler T."/>
            <person name="Tanaka Y."/>
            <person name="Shaulsky G."/>
            <person name="Schleicher M."/>
            <person name="Weinstock G.M."/>
            <person name="Rosenthal A."/>
            <person name="Cox E.C."/>
            <person name="Chisholm R.L."/>
            <person name="Gibbs R.A."/>
            <person name="Loomis W.F."/>
            <person name="Platzer M."/>
            <person name="Kay R.R."/>
            <person name="Williams J.G."/>
            <person name="Dear P.H."/>
            <person name="Noegel A.A."/>
            <person name="Barrell B.G."/>
            <person name="Kuspa A."/>
        </authorList>
    </citation>
    <scope>NUCLEOTIDE SEQUENCE [LARGE SCALE GENOMIC DNA]</scope>
    <source>
        <strain>AX4</strain>
    </source>
</reference>
<reference key="3">
    <citation type="journal article" date="2006" name="Mol. Cell. Proteomics">
        <title>Proteomics fingerprinting of phagosome maturation and evidence for the role of a Galpha during uptake.</title>
        <authorList>
            <person name="Gotthardt D."/>
            <person name="Blancheteau V."/>
            <person name="Bosserhoff A."/>
            <person name="Ruppert T."/>
            <person name="Delorenzi M."/>
            <person name="Soldati T."/>
        </authorList>
    </citation>
    <scope>IDENTIFICATION BY MASS SPECTROMETRY [LARGE SCALE ANALYSIS]</scope>
    <source>
        <strain>AX2</strain>
    </source>
</reference>
<organism>
    <name type="scientific">Dictyostelium discoideum</name>
    <name type="common">Social amoeba</name>
    <dbReference type="NCBI Taxonomy" id="44689"/>
    <lineage>
        <taxon>Eukaryota</taxon>
        <taxon>Amoebozoa</taxon>
        <taxon>Evosea</taxon>
        <taxon>Eumycetozoa</taxon>
        <taxon>Dictyostelia</taxon>
        <taxon>Dictyosteliales</taxon>
        <taxon>Dictyosteliaceae</taxon>
        <taxon>Dictyostelium</taxon>
    </lineage>
</organism>
<proteinExistence type="evidence at protein level"/>
<sequence length="542" mass="57610">MVLADLGNQLSSALRSLNETTIVNEDTINQLLKEVGNALSKSDVSMSLIIQMRKNIKDKIKLDQMAAGLNKRKIIKQVVFDELIRLLDPGVPLWKPTKGKSNIVMFVGLQGAGKTTSVTKLAYFYKKKGFSTAIVCADTFRAGAFDQVRHNAAKAKIHYYGSETEKDPVVVARTGVDIFKKDGTEIIIVDTSGRHKQDSELFEEMKQIETAVKPDNCIFVMDSSIGQAAYEQATAFRSSVKVGSIIITKMDGNSMGGGAISAVAATNTPIIFIGTGEHLTDLELFDPSTFVSKLLGYGDMKGMLEKIKEVIPEDSTSLKEIAQGKFTLRSMQQQFQQIMQLGPIDKLVQMIPGMNQLPQLQGNEGGLKLKAYINILDSLSEKELDGKKPITQKRIITIAQGSGRHPNEVVELLEQHKTFEKLIGKGGPGGGLGSLMAGKGGPKNMEQAMKQMNANGGMQGLMNSLKGMGGMGDLAKMFGGGGGGGGGMPSMGDLAKMMGGMGGGGRGGGGMPNMGDLAKMMGGMGGGAGKGGQNGFPNLDLD</sequence>
<dbReference type="EC" id="3.6.5.4" evidence="3"/>
<dbReference type="EMBL" id="AAFI02000013">
    <property type="protein sequence ID" value="EAL69478.1"/>
    <property type="molecule type" value="Genomic_DNA"/>
</dbReference>
<dbReference type="RefSeq" id="XP_643640.1">
    <property type="nucleotide sequence ID" value="XM_638548.1"/>
</dbReference>
<dbReference type="SMR" id="Q75K18"/>
<dbReference type="FunCoup" id="Q75K18">
    <property type="interactions" value="697"/>
</dbReference>
<dbReference type="STRING" id="44689.Q75K18"/>
<dbReference type="PaxDb" id="44689-DDB0232373"/>
<dbReference type="EnsemblProtists" id="EAL69478">
    <property type="protein sequence ID" value="EAL69478"/>
    <property type="gene ID" value="DDB_G0275455"/>
</dbReference>
<dbReference type="GeneID" id="8620227"/>
<dbReference type="KEGG" id="ddi:DDB_G0275455"/>
<dbReference type="dictyBase" id="DDB_G0275455">
    <property type="gene designation" value="srp54"/>
</dbReference>
<dbReference type="VEuPathDB" id="AmoebaDB:DDB_G0275455"/>
<dbReference type="eggNOG" id="KOG0780">
    <property type="taxonomic scope" value="Eukaryota"/>
</dbReference>
<dbReference type="HOGENOM" id="CLU_009301_6_1_1"/>
<dbReference type="InParanoid" id="Q75K18"/>
<dbReference type="OMA" id="GMTGQDA"/>
<dbReference type="PhylomeDB" id="Q75K18"/>
<dbReference type="Reactome" id="R-DDI-1799339">
    <property type="pathway name" value="SRP-dependent cotranslational protein targeting to membrane"/>
</dbReference>
<dbReference type="PRO" id="PR:Q75K18"/>
<dbReference type="Proteomes" id="UP000002195">
    <property type="component" value="Chromosome 2"/>
</dbReference>
<dbReference type="GO" id="GO:0005829">
    <property type="term" value="C:cytosol"/>
    <property type="evidence" value="ECO:0000318"/>
    <property type="project" value="GO_Central"/>
</dbReference>
<dbReference type="GO" id="GO:0005783">
    <property type="term" value="C:endoplasmic reticulum"/>
    <property type="evidence" value="ECO:0007669"/>
    <property type="project" value="UniProtKB-SubCell"/>
</dbReference>
<dbReference type="GO" id="GO:0045335">
    <property type="term" value="C:phagocytic vesicle"/>
    <property type="evidence" value="ECO:0007005"/>
    <property type="project" value="dictyBase"/>
</dbReference>
<dbReference type="GO" id="GO:0005786">
    <property type="term" value="C:signal recognition particle, endoplasmic reticulum targeting"/>
    <property type="evidence" value="ECO:0000318"/>
    <property type="project" value="GO_Central"/>
</dbReference>
<dbReference type="GO" id="GO:0008312">
    <property type="term" value="F:7S RNA binding"/>
    <property type="evidence" value="ECO:0000318"/>
    <property type="project" value="GO_Central"/>
</dbReference>
<dbReference type="GO" id="GO:0016887">
    <property type="term" value="F:ATP hydrolysis activity"/>
    <property type="evidence" value="ECO:0007669"/>
    <property type="project" value="InterPro"/>
</dbReference>
<dbReference type="GO" id="GO:0030942">
    <property type="term" value="F:endoplasmic reticulum signal peptide binding"/>
    <property type="evidence" value="ECO:0000318"/>
    <property type="project" value="GO_Central"/>
</dbReference>
<dbReference type="GO" id="GO:0005525">
    <property type="term" value="F:GTP binding"/>
    <property type="evidence" value="ECO:0007669"/>
    <property type="project" value="UniProtKB-KW"/>
</dbReference>
<dbReference type="GO" id="GO:0003924">
    <property type="term" value="F:GTPase activity"/>
    <property type="evidence" value="ECO:0007669"/>
    <property type="project" value="InterPro"/>
</dbReference>
<dbReference type="GO" id="GO:0006616">
    <property type="term" value="P:SRP-dependent cotranslational protein targeting to membrane, translocation"/>
    <property type="evidence" value="ECO:0000318"/>
    <property type="project" value="GO_Central"/>
</dbReference>
<dbReference type="CDD" id="cd17875">
    <property type="entry name" value="SRP54_G"/>
    <property type="match status" value="1"/>
</dbReference>
<dbReference type="FunFam" id="1.10.260.30:FF:000013">
    <property type="entry name" value="Signal recognition particle 54 kDa protein"/>
    <property type="match status" value="1"/>
</dbReference>
<dbReference type="FunFam" id="3.40.50.300:FF:000022">
    <property type="entry name" value="Signal recognition particle 54 kDa subunit"/>
    <property type="match status" value="1"/>
</dbReference>
<dbReference type="FunFam" id="1.20.120.140:FF:000001">
    <property type="entry name" value="Signal recognition particle GTPase"/>
    <property type="match status" value="1"/>
</dbReference>
<dbReference type="Gene3D" id="3.40.50.300">
    <property type="entry name" value="P-loop containing nucleotide triphosphate hydrolases"/>
    <property type="match status" value="1"/>
</dbReference>
<dbReference type="Gene3D" id="1.20.120.140">
    <property type="entry name" value="Signal recognition particle SRP54, nucleotide-binding domain"/>
    <property type="match status" value="1"/>
</dbReference>
<dbReference type="Gene3D" id="1.10.260.30">
    <property type="entry name" value="Signal recognition particle, SRP54 subunit, M-domain"/>
    <property type="match status" value="1"/>
</dbReference>
<dbReference type="HAMAP" id="MF_00306">
    <property type="entry name" value="SRP54"/>
    <property type="match status" value="1"/>
</dbReference>
<dbReference type="InterPro" id="IPR003593">
    <property type="entry name" value="AAA+_ATPase"/>
</dbReference>
<dbReference type="InterPro" id="IPR027417">
    <property type="entry name" value="P-loop_NTPase"/>
</dbReference>
<dbReference type="InterPro" id="IPR036891">
    <property type="entry name" value="Signal_recog_part_SRP54_M_sf"/>
</dbReference>
<dbReference type="InterPro" id="IPR013822">
    <property type="entry name" value="Signal_recog_particl_SRP54_hlx"/>
</dbReference>
<dbReference type="InterPro" id="IPR004125">
    <property type="entry name" value="Signal_recog_particle_SRP54_M"/>
</dbReference>
<dbReference type="InterPro" id="IPR036225">
    <property type="entry name" value="SRP/SRP_N"/>
</dbReference>
<dbReference type="InterPro" id="IPR022941">
    <property type="entry name" value="SRP54"/>
</dbReference>
<dbReference type="InterPro" id="IPR006325">
    <property type="entry name" value="SRP54_euk"/>
</dbReference>
<dbReference type="InterPro" id="IPR000897">
    <property type="entry name" value="SRP54_GTPase_dom"/>
</dbReference>
<dbReference type="InterPro" id="IPR042101">
    <property type="entry name" value="SRP54_N_sf"/>
</dbReference>
<dbReference type="NCBIfam" id="TIGR01425">
    <property type="entry name" value="SRP54_euk"/>
    <property type="match status" value="1"/>
</dbReference>
<dbReference type="PANTHER" id="PTHR11564">
    <property type="entry name" value="SIGNAL RECOGNITION PARTICLE 54K PROTEIN SRP54"/>
    <property type="match status" value="1"/>
</dbReference>
<dbReference type="PANTHER" id="PTHR11564:SF5">
    <property type="entry name" value="SIGNAL RECOGNITION PARTICLE SUBUNIT SRP54"/>
    <property type="match status" value="1"/>
</dbReference>
<dbReference type="Pfam" id="PF00448">
    <property type="entry name" value="SRP54"/>
    <property type="match status" value="1"/>
</dbReference>
<dbReference type="Pfam" id="PF02881">
    <property type="entry name" value="SRP54_N"/>
    <property type="match status" value="1"/>
</dbReference>
<dbReference type="Pfam" id="PF02978">
    <property type="entry name" value="SRP_SPB"/>
    <property type="match status" value="1"/>
</dbReference>
<dbReference type="SMART" id="SM00382">
    <property type="entry name" value="AAA"/>
    <property type="match status" value="1"/>
</dbReference>
<dbReference type="SMART" id="SM00962">
    <property type="entry name" value="SRP54"/>
    <property type="match status" value="1"/>
</dbReference>
<dbReference type="SMART" id="SM00963">
    <property type="entry name" value="SRP54_N"/>
    <property type="match status" value="1"/>
</dbReference>
<dbReference type="SUPFAM" id="SSF47364">
    <property type="entry name" value="Domain of the SRP/SRP receptor G-proteins"/>
    <property type="match status" value="1"/>
</dbReference>
<dbReference type="SUPFAM" id="SSF52540">
    <property type="entry name" value="P-loop containing nucleoside triphosphate hydrolases"/>
    <property type="match status" value="1"/>
</dbReference>
<dbReference type="SUPFAM" id="SSF47446">
    <property type="entry name" value="Signal peptide-binding domain"/>
    <property type="match status" value="1"/>
</dbReference>
<dbReference type="PROSITE" id="PS00300">
    <property type="entry name" value="SRP54"/>
    <property type="match status" value="1"/>
</dbReference>
<name>SRP54_DICDI</name>
<gene>
    <name type="primary">srp54</name>
    <name type="ORF">DDB_G0275455</name>
</gene>
<accession>Q75K18</accession>
<accession>Q552P1</accession>
<keyword id="KW-0963">Cytoplasm</keyword>
<keyword id="KW-0256">Endoplasmic reticulum</keyword>
<keyword id="KW-0342">GTP-binding</keyword>
<keyword id="KW-0378">Hydrolase</keyword>
<keyword id="KW-0547">Nucleotide-binding</keyword>
<keyword id="KW-1185">Reference proteome</keyword>
<keyword id="KW-0687">Ribonucleoprotein</keyword>
<keyword id="KW-0694">RNA-binding</keyword>
<keyword id="KW-0733">Signal recognition particle</keyword>
<evidence type="ECO:0000250" key="1"/>
<evidence type="ECO:0000250" key="2">
    <source>
        <dbReference type="UniProtKB" id="P61010"/>
    </source>
</evidence>
<evidence type="ECO:0000250" key="3">
    <source>
        <dbReference type="UniProtKB" id="P61011"/>
    </source>
</evidence>
<evidence type="ECO:0000305" key="4"/>
<protein>
    <recommendedName>
        <fullName>Signal recognition particle subunit SRP54</fullName>
        <ecNumber evidence="3">3.6.5.4</ecNumber>
    </recommendedName>
    <alternativeName>
        <fullName>Signal recognition particle 54 kDa protein</fullName>
    </alternativeName>
</protein>
<comment type="function">
    <text evidence="2 3">Component of the signal recognition particle (SRP) complex, a ribonucleoprotein complex that mediates the cotranslational targeting of secretory and membrane proteins to the endoplasmic reticulum (ER). As part of the SRP complex, associates with the SRP receptor (SR) component srpra to target secretory proteins to the endoplasmic reticulum membrane. Binds to the signal sequence of presecretory proteins when they emerge from the ribosomes. Displays basal GTPase activity, and stimulates reciprocal GTPase activation of the SR subunit SRPRA. Forms a guanosine 5'-triphosphate (GTP)-dependent complex with the SR subunit srpra. SR compaction and GTPase mediated rearrangement of SR drive SRP-mediated cotranslational protein translocation into the ER (By similarity). Requires the presence of srp9/srp14 and/or srp19 to stably interact with RNA (By similarity).</text>
</comment>
<comment type="catalytic activity">
    <reaction evidence="3">
        <text>GTP + H2O = GDP + phosphate + H(+)</text>
        <dbReference type="Rhea" id="RHEA:19669"/>
        <dbReference type="ChEBI" id="CHEBI:15377"/>
        <dbReference type="ChEBI" id="CHEBI:15378"/>
        <dbReference type="ChEBI" id="CHEBI:37565"/>
        <dbReference type="ChEBI" id="CHEBI:43474"/>
        <dbReference type="ChEBI" id="CHEBI:58189"/>
        <dbReference type="EC" id="3.6.5.4"/>
    </reaction>
    <physiologicalReaction direction="left-to-right" evidence="3">
        <dbReference type="Rhea" id="RHEA:19670"/>
    </physiologicalReaction>
</comment>
<comment type="subunit">
    <text evidence="3">Component of a signal recognition particle (SRP) complex that consists of a 7SL RNA molecule of 300 nucleotides and six protein subunits: srp72, srp68, srp54, srp19, srp14 and srp9.</text>
</comment>
<comment type="subcellular location">
    <subcellularLocation>
        <location evidence="3">Cytoplasm</location>
    </subcellularLocation>
    <subcellularLocation>
        <location evidence="3">Endoplasmic reticulum</location>
    </subcellularLocation>
</comment>
<comment type="domain">
    <text evidence="3">The NG domain, also named G domain, is a special guanosine triphosphatase (GTPase) domain, which binds GTP and forms a guanosine 5'-triphosphate (GTP)-dependent complex with a homologous NG domain in the SRP receptor subunit srpra. The two NG domains undergo cooperative rearrangements upon their assembly, which culminate in the reciprocal activation of the GTPase activity of one another. SRP receptor compaction upon binding with cargo-loaded SRP and GTPase rearrangement drive SRP-mediated cotranslational protein translocation into the ER.</text>
</comment>
<comment type="domain">
    <text evidence="3">The M domain binds the 7SL RNA in presence of srp19 and binds the signal sequence of presecretory proteins.</text>
</comment>
<comment type="similarity">
    <text evidence="4">Belongs to the GTP-binding SRP family. SRP54 subfamily.</text>
</comment>
<feature type="chain" id="PRO_0000327678" description="Signal recognition particle subunit SRP54">
    <location>
        <begin position="1"/>
        <end position="542"/>
    </location>
</feature>
<feature type="region of interest" description="G-domain">
    <location>
        <begin position="1"/>
        <end position="295"/>
    </location>
</feature>
<feature type="region of interest" description="M-domain">
    <location>
        <begin position="296"/>
        <end position="542"/>
    </location>
</feature>
<feature type="binding site" evidence="1">
    <location>
        <begin position="108"/>
        <end position="115"/>
    </location>
    <ligand>
        <name>GTP</name>
        <dbReference type="ChEBI" id="CHEBI:37565"/>
    </ligand>
</feature>
<feature type="binding site" evidence="1">
    <location>
        <begin position="190"/>
        <end position="194"/>
    </location>
    <ligand>
        <name>GTP</name>
        <dbReference type="ChEBI" id="CHEBI:37565"/>
    </ligand>
</feature>
<feature type="binding site" evidence="1">
    <location>
        <begin position="248"/>
        <end position="251"/>
    </location>
    <ligand>
        <name>GTP</name>
        <dbReference type="ChEBI" id="CHEBI:37565"/>
    </ligand>
</feature>